<keyword id="KW-0328">Glycosyltransferase</keyword>
<keyword id="KW-0460">Magnesium</keyword>
<keyword id="KW-0665">Pyrimidine biosynthesis</keyword>
<keyword id="KW-1185">Reference proteome</keyword>
<keyword id="KW-0808">Transferase</keyword>
<comment type="function">
    <text evidence="1">Catalyzes the transfer of a ribosyl phosphate group from 5-phosphoribose 1-diphosphate to orotate, leading to the formation of orotidine monophosphate (OMP).</text>
</comment>
<comment type="catalytic activity">
    <reaction evidence="1">
        <text>orotidine 5'-phosphate + diphosphate = orotate + 5-phospho-alpha-D-ribose 1-diphosphate</text>
        <dbReference type="Rhea" id="RHEA:10380"/>
        <dbReference type="ChEBI" id="CHEBI:30839"/>
        <dbReference type="ChEBI" id="CHEBI:33019"/>
        <dbReference type="ChEBI" id="CHEBI:57538"/>
        <dbReference type="ChEBI" id="CHEBI:58017"/>
        <dbReference type="EC" id="2.4.2.10"/>
    </reaction>
</comment>
<comment type="cofactor">
    <cofactor evidence="1">
        <name>Mg(2+)</name>
        <dbReference type="ChEBI" id="CHEBI:18420"/>
    </cofactor>
</comment>
<comment type="pathway">
    <text evidence="1">Pyrimidine metabolism; UMP biosynthesis via de novo pathway; UMP from orotate: step 1/2.</text>
</comment>
<comment type="subunit">
    <text evidence="1">Homodimer.</text>
</comment>
<comment type="similarity">
    <text evidence="1">Belongs to the purine/pyrimidine phosphoribosyltransferase family. PyrE subfamily.</text>
</comment>
<reference key="1">
    <citation type="journal article" date="2003" name="J. Bacteriol.">
        <title>Complete genome sequence of the oral pathogenic bacterium Porphyromonas gingivalis strain W83.</title>
        <authorList>
            <person name="Nelson K.E."/>
            <person name="Fleischmann R.D."/>
            <person name="DeBoy R.T."/>
            <person name="Paulsen I.T."/>
            <person name="Fouts D.E."/>
            <person name="Eisen J.A."/>
            <person name="Daugherty S.C."/>
            <person name="Dodson R.J."/>
            <person name="Durkin A.S."/>
            <person name="Gwinn M.L."/>
            <person name="Haft D.H."/>
            <person name="Kolonay J.F."/>
            <person name="Nelson W.C."/>
            <person name="Mason T.M."/>
            <person name="Tallon L."/>
            <person name="Gray J."/>
            <person name="Granger D."/>
            <person name="Tettelin H."/>
            <person name="Dong H."/>
            <person name="Galvin J.L."/>
            <person name="Duncan M.J."/>
            <person name="Dewhirst F.E."/>
            <person name="Fraser C.M."/>
        </authorList>
    </citation>
    <scope>NUCLEOTIDE SEQUENCE [LARGE SCALE GENOMIC DNA]</scope>
    <source>
        <strain>ATCC BAA-308 / W83</strain>
    </source>
</reference>
<dbReference type="EC" id="2.4.2.10" evidence="1"/>
<dbReference type="EMBL" id="AE015924">
    <property type="protein sequence ID" value="AAQ66417.1"/>
    <property type="molecule type" value="Genomic_DNA"/>
</dbReference>
<dbReference type="RefSeq" id="WP_005873430.1">
    <property type="nucleotide sequence ID" value="NC_002950.2"/>
</dbReference>
<dbReference type="SMR" id="Q7MUX4"/>
<dbReference type="STRING" id="242619.PG_1353"/>
<dbReference type="EnsemblBacteria" id="AAQ66417">
    <property type="protein sequence ID" value="AAQ66417"/>
    <property type="gene ID" value="PG_1353"/>
</dbReference>
<dbReference type="KEGG" id="pgi:PG_1353"/>
<dbReference type="PATRIC" id="fig|242619.8.peg.1256"/>
<dbReference type="eggNOG" id="COG0461">
    <property type="taxonomic scope" value="Bacteria"/>
</dbReference>
<dbReference type="HOGENOM" id="CLU_074878_1_1_10"/>
<dbReference type="BioCyc" id="PGIN242619:G1G02-1259-MONOMER"/>
<dbReference type="UniPathway" id="UPA00070">
    <property type="reaction ID" value="UER00119"/>
</dbReference>
<dbReference type="Proteomes" id="UP000000588">
    <property type="component" value="Chromosome"/>
</dbReference>
<dbReference type="GO" id="GO:0000287">
    <property type="term" value="F:magnesium ion binding"/>
    <property type="evidence" value="ECO:0007669"/>
    <property type="project" value="UniProtKB-UniRule"/>
</dbReference>
<dbReference type="GO" id="GO:0004588">
    <property type="term" value="F:orotate phosphoribosyltransferase activity"/>
    <property type="evidence" value="ECO:0007669"/>
    <property type="project" value="UniProtKB-UniRule"/>
</dbReference>
<dbReference type="GO" id="GO:0044205">
    <property type="term" value="P:'de novo' UMP biosynthetic process"/>
    <property type="evidence" value="ECO:0007669"/>
    <property type="project" value="UniProtKB-UniRule"/>
</dbReference>
<dbReference type="GO" id="GO:0019856">
    <property type="term" value="P:pyrimidine nucleobase biosynthetic process"/>
    <property type="evidence" value="ECO:0007669"/>
    <property type="project" value="TreeGrafter"/>
</dbReference>
<dbReference type="CDD" id="cd06223">
    <property type="entry name" value="PRTases_typeI"/>
    <property type="match status" value="1"/>
</dbReference>
<dbReference type="Gene3D" id="3.40.50.2020">
    <property type="match status" value="1"/>
</dbReference>
<dbReference type="HAMAP" id="MF_01208">
    <property type="entry name" value="PyrE"/>
    <property type="match status" value="1"/>
</dbReference>
<dbReference type="InterPro" id="IPR023031">
    <property type="entry name" value="OPRT"/>
</dbReference>
<dbReference type="InterPro" id="IPR004467">
    <property type="entry name" value="Or_phspho_trans_dom"/>
</dbReference>
<dbReference type="InterPro" id="IPR000836">
    <property type="entry name" value="PRibTrfase_dom"/>
</dbReference>
<dbReference type="InterPro" id="IPR029057">
    <property type="entry name" value="PRTase-like"/>
</dbReference>
<dbReference type="NCBIfam" id="TIGR00336">
    <property type="entry name" value="pyrE"/>
    <property type="match status" value="1"/>
</dbReference>
<dbReference type="PANTHER" id="PTHR19278">
    <property type="entry name" value="OROTATE PHOSPHORIBOSYLTRANSFERASE"/>
    <property type="match status" value="1"/>
</dbReference>
<dbReference type="PANTHER" id="PTHR19278:SF9">
    <property type="entry name" value="URIDINE 5'-MONOPHOSPHATE SYNTHASE"/>
    <property type="match status" value="1"/>
</dbReference>
<dbReference type="Pfam" id="PF00156">
    <property type="entry name" value="Pribosyltran"/>
    <property type="match status" value="1"/>
</dbReference>
<dbReference type="SUPFAM" id="SSF53271">
    <property type="entry name" value="PRTase-like"/>
    <property type="match status" value="1"/>
</dbReference>
<dbReference type="PROSITE" id="PS00103">
    <property type="entry name" value="PUR_PYR_PR_TRANSFER"/>
    <property type="match status" value="1"/>
</dbReference>
<accession>Q7MUX4</accession>
<evidence type="ECO:0000255" key="1">
    <source>
        <dbReference type="HAMAP-Rule" id="MF_01208"/>
    </source>
</evidence>
<name>PYRE_PORGI</name>
<sequence length="210" mass="23021">MKTLGKLIASKLIEVKAIKLQPNNPFTWASGWKAPIYCDNRKTLSYPQIRSLIKLELARVISETFGDVEAIAGVATGAIAQGALVADLLGLPFVYVRSSPKDHGLENLVEGELKPNSKVVVIEDLISTGGSSLKAAEAIRNFGCEVLGMVAVYTHGFPMAEQNFEKAEVKLVTLTDYDQVIEEALRTGYISAENVELLREWRKSPETWGI</sequence>
<proteinExistence type="inferred from homology"/>
<protein>
    <recommendedName>
        <fullName evidence="1">Orotate phosphoribosyltransferase</fullName>
        <shortName evidence="1">OPRT</shortName>
        <shortName evidence="1">OPRTase</shortName>
        <ecNumber evidence="1">2.4.2.10</ecNumber>
    </recommendedName>
</protein>
<organism>
    <name type="scientific">Porphyromonas gingivalis (strain ATCC BAA-308 / W83)</name>
    <dbReference type="NCBI Taxonomy" id="242619"/>
    <lineage>
        <taxon>Bacteria</taxon>
        <taxon>Pseudomonadati</taxon>
        <taxon>Bacteroidota</taxon>
        <taxon>Bacteroidia</taxon>
        <taxon>Bacteroidales</taxon>
        <taxon>Porphyromonadaceae</taxon>
        <taxon>Porphyromonas</taxon>
    </lineage>
</organism>
<feature type="chain" id="PRO_0000110721" description="Orotate phosphoribosyltransferase">
    <location>
        <begin position="1"/>
        <end position="210"/>
    </location>
</feature>
<feature type="binding site" evidence="1">
    <location>
        <position position="97"/>
    </location>
    <ligand>
        <name>5-phospho-alpha-D-ribose 1-diphosphate</name>
        <dbReference type="ChEBI" id="CHEBI:58017"/>
        <note>ligand shared between dimeric partners</note>
    </ligand>
</feature>
<feature type="binding site" evidence="1">
    <location>
        <position position="101"/>
    </location>
    <ligand>
        <name>5-phospho-alpha-D-ribose 1-diphosphate</name>
        <dbReference type="ChEBI" id="CHEBI:58017"/>
        <note>ligand shared between dimeric partners</note>
    </ligand>
</feature>
<feature type="binding site" evidence="1">
    <location>
        <position position="103"/>
    </location>
    <ligand>
        <name>5-phospho-alpha-D-ribose 1-diphosphate</name>
        <dbReference type="ChEBI" id="CHEBI:58017"/>
        <note>ligand shared between dimeric partners</note>
    </ligand>
</feature>
<feature type="binding site" description="in other chain" evidence="1">
    <location>
        <begin position="123"/>
        <end position="131"/>
    </location>
    <ligand>
        <name>5-phospho-alpha-D-ribose 1-diphosphate</name>
        <dbReference type="ChEBI" id="CHEBI:58017"/>
        <note>ligand shared between dimeric partners</note>
    </ligand>
</feature>
<feature type="binding site" evidence="1">
    <location>
        <position position="127"/>
    </location>
    <ligand>
        <name>orotate</name>
        <dbReference type="ChEBI" id="CHEBI:30839"/>
    </ligand>
</feature>
<gene>
    <name evidence="1" type="primary">pyrE</name>
    <name type="ordered locus">PG_1353</name>
</gene>